<name>RR19_PANGI</name>
<comment type="function">
    <text evidence="1">Protein S19 forms a complex with S13 that binds strongly to the 16S ribosomal RNA.</text>
</comment>
<comment type="subcellular location">
    <subcellularLocation>
        <location>Plastid</location>
        <location>Chloroplast</location>
    </subcellularLocation>
</comment>
<comment type="similarity">
    <text evidence="1">Belongs to the universal ribosomal protein uS19 family.</text>
</comment>
<organism>
    <name type="scientific">Panax ginseng</name>
    <name type="common">Korean ginseng</name>
    <dbReference type="NCBI Taxonomy" id="4054"/>
    <lineage>
        <taxon>Eukaryota</taxon>
        <taxon>Viridiplantae</taxon>
        <taxon>Streptophyta</taxon>
        <taxon>Embryophyta</taxon>
        <taxon>Tracheophyta</taxon>
        <taxon>Spermatophyta</taxon>
        <taxon>Magnoliopsida</taxon>
        <taxon>eudicotyledons</taxon>
        <taxon>Gunneridae</taxon>
        <taxon>Pentapetalae</taxon>
        <taxon>asterids</taxon>
        <taxon>campanulids</taxon>
        <taxon>Apiales</taxon>
        <taxon>Araliaceae</taxon>
        <taxon>Panax</taxon>
    </lineage>
</organism>
<dbReference type="EMBL" id="AY582139">
    <property type="protein sequence ID" value="AAT98549.1"/>
    <property type="molecule type" value="Genomic_DNA"/>
</dbReference>
<dbReference type="RefSeq" id="YP_087006.1">
    <property type="nucleotide sequence ID" value="NC_006290.1"/>
</dbReference>
<dbReference type="SMR" id="Q68RW6"/>
<dbReference type="GeneID" id="3021549"/>
<dbReference type="GO" id="GO:0009507">
    <property type="term" value="C:chloroplast"/>
    <property type="evidence" value="ECO:0007669"/>
    <property type="project" value="UniProtKB-SubCell"/>
</dbReference>
<dbReference type="GO" id="GO:0005763">
    <property type="term" value="C:mitochondrial small ribosomal subunit"/>
    <property type="evidence" value="ECO:0007669"/>
    <property type="project" value="TreeGrafter"/>
</dbReference>
<dbReference type="GO" id="GO:0019843">
    <property type="term" value="F:rRNA binding"/>
    <property type="evidence" value="ECO:0007669"/>
    <property type="project" value="UniProtKB-UniRule"/>
</dbReference>
<dbReference type="GO" id="GO:0003735">
    <property type="term" value="F:structural constituent of ribosome"/>
    <property type="evidence" value="ECO:0007669"/>
    <property type="project" value="InterPro"/>
</dbReference>
<dbReference type="GO" id="GO:0000028">
    <property type="term" value="P:ribosomal small subunit assembly"/>
    <property type="evidence" value="ECO:0007669"/>
    <property type="project" value="TreeGrafter"/>
</dbReference>
<dbReference type="GO" id="GO:0006412">
    <property type="term" value="P:translation"/>
    <property type="evidence" value="ECO:0007669"/>
    <property type="project" value="UniProtKB-UniRule"/>
</dbReference>
<dbReference type="FunFam" id="3.30.860.10:FF:000001">
    <property type="entry name" value="30S ribosomal protein S19"/>
    <property type="match status" value="1"/>
</dbReference>
<dbReference type="Gene3D" id="3.30.860.10">
    <property type="entry name" value="30s Ribosomal Protein S19, Chain A"/>
    <property type="match status" value="1"/>
</dbReference>
<dbReference type="HAMAP" id="MF_00531">
    <property type="entry name" value="Ribosomal_uS19"/>
    <property type="match status" value="1"/>
</dbReference>
<dbReference type="InterPro" id="IPR002222">
    <property type="entry name" value="Ribosomal_uS19"/>
</dbReference>
<dbReference type="InterPro" id="IPR005732">
    <property type="entry name" value="Ribosomal_uS19_bac-type"/>
</dbReference>
<dbReference type="InterPro" id="IPR020934">
    <property type="entry name" value="Ribosomal_uS19_CS"/>
</dbReference>
<dbReference type="InterPro" id="IPR023575">
    <property type="entry name" value="Ribosomal_uS19_SF"/>
</dbReference>
<dbReference type="NCBIfam" id="TIGR01050">
    <property type="entry name" value="rpsS_bact"/>
    <property type="match status" value="1"/>
</dbReference>
<dbReference type="PANTHER" id="PTHR11880">
    <property type="entry name" value="RIBOSOMAL PROTEIN S19P FAMILY MEMBER"/>
    <property type="match status" value="1"/>
</dbReference>
<dbReference type="PANTHER" id="PTHR11880:SF8">
    <property type="entry name" value="SMALL RIBOSOMAL SUBUNIT PROTEIN US19M"/>
    <property type="match status" value="1"/>
</dbReference>
<dbReference type="Pfam" id="PF00203">
    <property type="entry name" value="Ribosomal_S19"/>
    <property type="match status" value="1"/>
</dbReference>
<dbReference type="PIRSF" id="PIRSF002144">
    <property type="entry name" value="Ribosomal_S19"/>
    <property type="match status" value="1"/>
</dbReference>
<dbReference type="PRINTS" id="PR00975">
    <property type="entry name" value="RIBOSOMALS19"/>
</dbReference>
<dbReference type="SUPFAM" id="SSF54570">
    <property type="entry name" value="Ribosomal protein S19"/>
    <property type="match status" value="1"/>
</dbReference>
<dbReference type="PROSITE" id="PS00323">
    <property type="entry name" value="RIBOSOMAL_S19"/>
    <property type="match status" value="1"/>
</dbReference>
<feature type="chain" id="PRO_0000129978" description="Small ribosomal subunit protein uS19c">
    <location>
        <begin position="1"/>
        <end position="92"/>
    </location>
</feature>
<keyword id="KW-0150">Chloroplast</keyword>
<keyword id="KW-0934">Plastid</keyword>
<keyword id="KW-0687">Ribonucleoprotein</keyword>
<keyword id="KW-0689">Ribosomal protein</keyword>
<keyword id="KW-0694">RNA-binding</keyword>
<keyword id="KW-0699">rRNA-binding</keyword>
<reference key="1">
    <citation type="journal article" date="2004" name="DNA Res.">
        <title>Complete chloroplast genome sequence from Korea ginseng (Panax schinseng Nees) and comparative analysis of sequence evolution among 17 vascular plants.</title>
        <authorList>
            <person name="Kim K.-J."/>
            <person name="Lee H.-L."/>
        </authorList>
    </citation>
    <scope>NUCLEOTIDE SEQUENCE [LARGE SCALE GENOMIC DNA]</scope>
</reference>
<proteinExistence type="inferred from homology"/>
<protein>
    <recommendedName>
        <fullName evidence="1">Small ribosomal subunit protein uS19c</fullName>
    </recommendedName>
    <alternativeName>
        <fullName evidence="2">30S ribosomal protein S19, chloroplastic</fullName>
    </alternativeName>
</protein>
<accession>Q68RW6</accession>
<geneLocation type="chloroplast"/>
<gene>
    <name evidence="1" type="primary">rps19</name>
    <name type="ORF">PSC0858</name>
</gene>
<sequence length="92" mass="10586">MTRSLKKNPFVANRLLRKIDKLNTKAEKEIIITWSRASTIIPTMIGHTIAIHNGKEHLPIYINDRMVGHKLGEFAPTLNFRGHAKSDNRSRR</sequence>
<evidence type="ECO:0000255" key="1">
    <source>
        <dbReference type="HAMAP-Rule" id="MF_00531"/>
    </source>
</evidence>
<evidence type="ECO:0000305" key="2"/>